<sequence length="145" mass="16333">MRQTFMANESNIERKWYVIDAEGQTLGRLSSEVASILRGKNKVTYTPHVDTGDYVIVINASKIEFTGNKETDKVYYRHSNHPGGIKSITAGELRRTNPERLIENSIKGMLPSTRLGEKQGKKLFVYGGAEHPHAAQQPENYELRG</sequence>
<name>RL13_STAA1</name>
<accession>A7X5B4</accession>
<gene>
    <name evidence="1" type="primary">rplM</name>
    <name type="ordered locus">SAHV_2202</name>
</gene>
<reference key="1">
    <citation type="journal article" date="2008" name="Antimicrob. Agents Chemother.">
        <title>Mutated response regulator graR is responsible for phenotypic conversion of Staphylococcus aureus from heterogeneous vancomycin-intermediate resistance to vancomycin-intermediate resistance.</title>
        <authorList>
            <person name="Neoh H.-M."/>
            <person name="Cui L."/>
            <person name="Yuzawa H."/>
            <person name="Takeuchi F."/>
            <person name="Matsuo M."/>
            <person name="Hiramatsu K."/>
        </authorList>
    </citation>
    <scope>NUCLEOTIDE SEQUENCE [LARGE SCALE GENOMIC DNA]</scope>
    <source>
        <strain>Mu3 / ATCC 700698</strain>
    </source>
</reference>
<comment type="function">
    <text evidence="1">This protein is one of the early assembly proteins of the 50S ribosomal subunit, although it is not seen to bind rRNA by itself. It is important during the early stages of 50S assembly.</text>
</comment>
<comment type="subunit">
    <text evidence="1">Part of the 50S ribosomal subunit.</text>
</comment>
<comment type="similarity">
    <text evidence="1">Belongs to the universal ribosomal protein uL13 family.</text>
</comment>
<keyword id="KW-0687">Ribonucleoprotein</keyword>
<keyword id="KW-0689">Ribosomal protein</keyword>
<proteinExistence type="inferred from homology"/>
<organism>
    <name type="scientific">Staphylococcus aureus (strain Mu3 / ATCC 700698)</name>
    <dbReference type="NCBI Taxonomy" id="418127"/>
    <lineage>
        <taxon>Bacteria</taxon>
        <taxon>Bacillati</taxon>
        <taxon>Bacillota</taxon>
        <taxon>Bacilli</taxon>
        <taxon>Bacillales</taxon>
        <taxon>Staphylococcaceae</taxon>
        <taxon>Staphylococcus</taxon>
    </lineage>
</organism>
<evidence type="ECO:0000255" key="1">
    <source>
        <dbReference type="HAMAP-Rule" id="MF_01366"/>
    </source>
</evidence>
<evidence type="ECO:0000305" key="2"/>
<protein>
    <recommendedName>
        <fullName evidence="1">Large ribosomal subunit protein uL13</fullName>
    </recommendedName>
    <alternativeName>
        <fullName evidence="2">50S ribosomal protein L13</fullName>
    </alternativeName>
</protein>
<dbReference type="EMBL" id="AP009324">
    <property type="protein sequence ID" value="BAF79085.1"/>
    <property type="molecule type" value="Genomic_DNA"/>
</dbReference>
<dbReference type="RefSeq" id="WP_001250038.1">
    <property type="nucleotide sequence ID" value="NZ_CTYB01000025.1"/>
</dbReference>
<dbReference type="SMR" id="A7X5B4"/>
<dbReference type="GeneID" id="98346530"/>
<dbReference type="KEGG" id="saw:SAHV_2202"/>
<dbReference type="HOGENOM" id="CLU_082184_2_2_9"/>
<dbReference type="GO" id="GO:0022625">
    <property type="term" value="C:cytosolic large ribosomal subunit"/>
    <property type="evidence" value="ECO:0007669"/>
    <property type="project" value="TreeGrafter"/>
</dbReference>
<dbReference type="GO" id="GO:0003729">
    <property type="term" value="F:mRNA binding"/>
    <property type="evidence" value="ECO:0007669"/>
    <property type="project" value="TreeGrafter"/>
</dbReference>
<dbReference type="GO" id="GO:0003735">
    <property type="term" value="F:structural constituent of ribosome"/>
    <property type="evidence" value="ECO:0007669"/>
    <property type="project" value="InterPro"/>
</dbReference>
<dbReference type="GO" id="GO:0017148">
    <property type="term" value="P:negative regulation of translation"/>
    <property type="evidence" value="ECO:0007669"/>
    <property type="project" value="TreeGrafter"/>
</dbReference>
<dbReference type="GO" id="GO:0006412">
    <property type="term" value="P:translation"/>
    <property type="evidence" value="ECO:0007669"/>
    <property type="project" value="UniProtKB-UniRule"/>
</dbReference>
<dbReference type="CDD" id="cd00392">
    <property type="entry name" value="Ribosomal_L13"/>
    <property type="match status" value="1"/>
</dbReference>
<dbReference type="FunFam" id="3.90.1180.10:FF:000001">
    <property type="entry name" value="50S ribosomal protein L13"/>
    <property type="match status" value="1"/>
</dbReference>
<dbReference type="Gene3D" id="3.90.1180.10">
    <property type="entry name" value="Ribosomal protein L13"/>
    <property type="match status" value="1"/>
</dbReference>
<dbReference type="HAMAP" id="MF_01366">
    <property type="entry name" value="Ribosomal_uL13"/>
    <property type="match status" value="1"/>
</dbReference>
<dbReference type="InterPro" id="IPR005822">
    <property type="entry name" value="Ribosomal_uL13"/>
</dbReference>
<dbReference type="InterPro" id="IPR005823">
    <property type="entry name" value="Ribosomal_uL13_bac-type"/>
</dbReference>
<dbReference type="InterPro" id="IPR023563">
    <property type="entry name" value="Ribosomal_uL13_CS"/>
</dbReference>
<dbReference type="InterPro" id="IPR036899">
    <property type="entry name" value="Ribosomal_uL13_sf"/>
</dbReference>
<dbReference type="NCBIfam" id="TIGR01066">
    <property type="entry name" value="rplM_bact"/>
    <property type="match status" value="1"/>
</dbReference>
<dbReference type="PANTHER" id="PTHR11545:SF2">
    <property type="entry name" value="LARGE RIBOSOMAL SUBUNIT PROTEIN UL13M"/>
    <property type="match status" value="1"/>
</dbReference>
<dbReference type="PANTHER" id="PTHR11545">
    <property type="entry name" value="RIBOSOMAL PROTEIN L13"/>
    <property type="match status" value="1"/>
</dbReference>
<dbReference type="Pfam" id="PF00572">
    <property type="entry name" value="Ribosomal_L13"/>
    <property type="match status" value="1"/>
</dbReference>
<dbReference type="PIRSF" id="PIRSF002181">
    <property type="entry name" value="Ribosomal_L13"/>
    <property type="match status" value="1"/>
</dbReference>
<dbReference type="SUPFAM" id="SSF52161">
    <property type="entry name" value="Ribosomal protein L13"/>
    <property type="match status" value="1"/>
</dbReference>
<dbReference type="PROSITE" id="PS00783">
    <property type="entry name" value="RIBOSOMAL_L13"/>
    <property type="match status" value="1"/>
</dbReference>
<feature type="chain" id="PRO_1000055475" description="Large ribosomal subunit protein uL13">
    <location>
        <begin position="1"/>
        <end position="145"/>
    </location>
</feature>